<proteinExistence type="inferred from homology"/>
<evidence type="ECO:0000250" key="1"/>
<evidence type="ECO:0000255" key="2">
    <source>
        <dbReference type="PROSITE-ProRule" id="PRU00319"/>
    </source>
</evidence>
<evidence type="ECO:0000305" key="3"/>
<accession>P0A2S0</accession>
<accession>O87635</accession>
<accession>P37403</accession>
<name>LRP_SALTY</name>
<keyword id="KW-0010">Activator</keyword>
<keyword id="KW-0238">DNA-binding</keyword>
<keyword id="KW-1185">Reference proteome</keyword>
<keyword id="KW-0804">Transcription</keyword>
<keyword id="KW-0805">Transcription regulation</keyword>
<protein>
    <recommendedName>
        <fullName>Leucine-responsive regulatory protein</fullName>
    </recommendedName>
</protein>
<organism>
    <name type="scientific">Salmonella typhimurium (strain LT2 / SGSC1412 / ATCC 700720)</name>
    <dbReference type="NCBI Taxonomy" id="99287"/>
    <lineage>
        <taxon>Bacteria</taxon>
        <taxon>Pseudomonadati</taxon>
        <taxon>Pseudomonadota</taxon>
        <taxon>Gammaproteobacteria</taxon>
        <taxon>Enterobacterales</taxon>
        <taxon>Enterobacteriaceae</taxon>
        <taxon>Salmonella</taxon>
    </lineage>
</organism>
<comment type="function">
    <text>Mediates a global response to leucine. Exogenous leucine affects the expression of a number of different operons; lrp mediates this effect for at least some of these operons. For example it is regulator of the branched-chain amino acid transport genes.</text>
</comment>
<comment type="subunit">
    <text>Homodimer.</text>
</comment>
<reference key="1">
    <citation type="journal article" date="1995" name="J. Bacteriol.">
        <title>The amino acid sequence of Lrp is highly conserved in four enteric microorganisms.</title>
        <authorList>
            <person name="Friedberg D."/>
            <person name="Platko J.V."/>
            <person name="Tyler B."/>
            <person name="Calvo J.M."/>
        </authorList>
    </citation>
    <scope>NUCLEOTIDE SEQUENCE [GENOMIC DNA]</scope>
</reference>
<reference key="2">
    <citation type="journal article" date="2001" name="Nature">
        <title>Complete genome sequence of Salmonella enterica serovar Typhimurium LT2.</title>
        <authorList>
            <person name="McClelland M."/>
            <person name="Sanderson K.E."/>
            <person name="Spieth J."/>
            <person name="Clifton S.W."/>
            <person name="Latreille P."/>
            <person name="Courtney L."/>
            <person name="Porwollik S."/>
            <person name="Ali J."/>
            <person name="Dante M."/>
            <person name="Du F."/>
            <person name="Hou S."/>
            <person name="Layman D."/>
            <person name="Leonard S."/>
            <person name="Nguyen C."/>
            <person name="Scott K."/>
            <person name="Holmes A."/>
            <person name="Grewal N."/>
            <person name="Mulvaney E."/>
            <person name="Ryan E."/>
            <person name="Sun H."/>
            <person name="Florea L."/>
            <person name="Miller W."/>
            <person name="Stoneking T."/>
            <person name="Nhan M."/>
            <person name="Waterston R."/>
            <person name="Wilson R.K."/>
        </authorList>
    </citation>
    <scope>NUCLEOTIDE SEQUENCE [LARGE SCALE GENOMIC DNA]</scope>
    <source>
        <strain>LT2 / SGSC1412 / ATCC 700720</strain>
    </source>
</reference>
<gene>
    <name type="primary">lrp</name>
    <name type="ordered locus">STM0959</name>
</gene>
<dbReference type="EMBL" id="U02273">
    <property type="protein sequence ID" value="AAA75467.1"/>
    <property type="molecule type" value="Genomic_DNA"/>
</dbReference>
<dbReference type="EMBL" id="AE006468">
    <property type="protein sequence ID" value="AAL19894.1"/>
    <property type="molecule type" value="Genomic_DNA"/>
</dbReference>
<dbReference type="PIR" id="S59993">
    <property type="entry name" value="S59993"/>
</dbReference>
<dbReference type="RefSeq" id="NP_459935.1">
    <property type="nucleotide sequence ID" value="NC_003197.2"/>
</dbReference>
<dbReference type="RefSeq" id="WP_000228469.1">
    <property type="nucleotide sequence ID" value="NC_003197.2"/>
</dbReference>
<dbReference type="BMRB" id="P0A2S0"/>
<dbReference type="SMR" id="P0A2S0"/>
<dbReference type="STRING" id="99287.STM0959"/>
<dbReference type="PaxDb" id="99287-STM0959"/>
<dbReference type="GeneID" id="1252478"/>
<dbReference type="GeneID" id="98387581"/>
<dbReference type="KEGG" id="stm:STM0959"/>
<dbReference type="PATRIC" id="fig|99287.12.peg.1011"/>
<dbReference type="HOGENOM" id="CLU_091233_0_0_6"/>
<dbReference type="OMA" id="GPSKLHM"/>
<dbReference type="PhylomeDB" id="P0A2S0"/>
<dbReference type="BioCyc" id="SENT99287:STM0959-MONOMER"/>
<dbReference type="PRO" id="PR:P0A2S0"/>
<dbReference type="Proteomes" id="UP000001014">
    <property type="component" value="Chromosome"/>
</dbReference>
<dbReference type="GO" id="GO:0005829">
    <property type="term" value="C:cytosol"/>
    <property type="evidence" value="ECO:0000318"/>
    <property type="project" value="GO_Central"/>
</dbReference>
<dbReference type="GO" id="GO:0043565">
    <property type="term" value="F:sequence-specific DNA binding"/>
    <property type="evidence" value="ECO:0000318"/>
    <property type="project" value="GO_Central"/>
</dbReference>
<dbReference type="GO" id="GO:0006524">
    <property type="term" value="P:alanine catabolic process"/>
    <property type="evidence" value="ECO:0000318"/>
    <property type="project" value="GO_Central"/>
</dbReference>
<dbReference type="GO" id="GO:0006355">
    <property type="term" value="P:regulation of DNA-templated transcription"/>
    <property type="evidence" value="ECO:0007669"/>
    <property type="project" value="UniProtKB-ARBA"/>
</dbReference>
<dbReference type="GO" id="GO:0043201">
    <property type="term" value="P:response to L-leucine"/>
    <property type="evidence" value="ECO:0000318"/>
    <property type="project" value="GO_Central"/>
</dbReference>
<dbReference type="CDD" id="cd00090">
    <property type="entry name" value="HTH_ARSR"/>
    <property type="match status" value="1"/>
</dbReference>
<dbReference type="FunFam" id="1.10.10.10:FF:000015">
    <property type="entry name" value="Leucine-responsive transcriptional regulator Lrp"/>
    <property type="match status" value="1"/>
</dbReference>
<dbReference type="FunFam" id="3.30.70.920:FF:000001">
    <property type="entry name" value="Transcriptional regulator, AsnC family"/>
    <property type="match status" value="1"/>
</dbReference>
<dbReference type="Gene3D" id="3.30.70.920">
    <property type="match status" value="1"/>
</dbReference>
<dbReference type="Gene3D" id="1.10.10.10">
    <property type="entry name" value="Winged helix-like DNA-binding domain superfamily/Winged helix DNA-binding domain"/>
    <property type="match status" value="1"/>
</dbReference>
<dbReference type="InterPro" id="IPR011991">
    <property type="entry name" value="ArsR-like_HTH"/>
</dbReference>
<dbReference type="InterPro" id="IPR000485">
    <property type="entry name" value="AsnC-type_HTH_dom"/>
</dbReference>
<dbReference type="InterPro" id="IPR011008">
    <property type="entry name" value="Dimeric_a/b-barrel"/>
</dbReference>
<dbReference type="InterPro" id="IPR019888">
    <property type="entry name" value="Tscrpt_reg_AsnC-like"/>
</dbReference>
<dbReference type="InterPro" id="IPR019887">
    <property type="entry name" value="Tscrpt_reg_AsnC/Lrp_C"/>
</dbReference>
<dbReference type="InterPro" id="IPR019885">
    <property type="entry name" value="Tscrpt_reg_HTH_AsnC-type_CS"/>
</dbReference>
<dbReference type="InterPro" id="IPR036388">
    <property type="entry name" value="WH-like_DNA-bd_sf"/>
</dbReference>
<dbReference type="InterPro" id="IPR036390">
    <property type="entry name" value="WH_DNA-bd_sf"/>
</dbReference>
<dbReference type="NCBIfam" id="NF008370">
    <property type="entry name" value="PRK11169.1"/>
    <property type="match status" value="1"/>
</dbReference>
<dbReference type="PANTHER" id="PTHR30154">
    <property type="entry name" value="LEUCINE-RESPONSIVE REGULATORY PROTEIN"/>
    <property type="match status" value="1"/>
</dbReference>
<dbReference type="PANTHER" id="PTHR30154:SF0">
    <property type="entry name" value="LEUCINE-RESPONSIVE REGULATORY PROTEIN"/>
    <property type="match status" value="1"/>
</dbReference>
<dbReference type="Pfam" id="PF01037">
    <property type="entry name" value="AsnC_trans_reg"/>
    <property type="match status" value="1"/>
</dbReference>
<dbReference type="Pfam" id="PF13412">
    <property type="entry name" value="HTH_24"/>
    <property type="match status" value="1"/>
</dbReference>
<dbReference type="PRINTS" id="PR00033">
    <property type="entry name" value="HTHASNC"/>
</dbReference>
<dbReference type="SMART" id="SM00344">
    <property type="entry name" value="HTH_ASNC"/>
    <property type="match status" value="1"/>
</dbReference>
<dbReference type="SUPFAM" id="SSF54909">
    <property type="entry name" value="Dimeric alpha+beta barrel"/>
    <property type="match status" value="1"/>
</dbReference>
<dbReference type="SUPFAM" id="SSF46785">
    <property type="entry name" value="Winged helix' DNA-binding domain"/>
    <property type="match status" value="1"/>
</dbReference>
<dbReference type="PROSITE" id="PS00519">
    <property type="entry name" value="HTH_ASNC_1"/>
    <property type="match status" value="1"/>
</dbReference>
<dbReference type="PROSITE" id="PS50956">
    <property type="entry name" value="HTH_ASNC_2"/>
    <property type="match status" value="1"/>
</dbReference>
<feature type="initiator methionine" description="Removed" evidence="1">
    <location>
        <position position="1"/>
    </location>
</feature>
<feature type="chain" id="PRO_0000111735" description="Leucine-responsive regulatory protein">
    <location>
        <begin position="2"/>
        <end position="164"/>
    </location>
</feature>
<feature type="domain" description="HTH asnC-type" evidence="2">
    <location>
        <begin position="12"/>
        <end position="73"/>
    </location>
</feature>
<feature type="DNA-binding region" description="H-T-H motif" evidence="2">
    <location>
        <begin position="31"/>
        <end position="50"/>
    </location>
</feature>
<feature type="sequence conflict" description="In Ref. 1; AAA75467." evidence="3" ref="1">
    <original>A</original>
    <variation>G</variation>
    <location>
        <position position="86"/>
    </location>
</feature>
<sequence>MVDSKKRPGKDLDRIDRNILNELQKDGRISNVELSKRVGLSPTPCLERVRRLERQGFIQGYTALLNPHYLDASLLVFVEITLNRGAPDVFEQFNAAVQKLEEIQECHLVSGDFDYLLKTRVPDMSAYRKLLGETLLRLPGVNDTRTYVVMEEVKQSNRLVIKTR</sequence>